<proteinExistence type="evidence at protein level"/>
<keyword id="KW-0119">Carbohydrate metabolism</keyword>
<keyword id="KW-0146">Chitin degradation</keyword>
<keyword id="KW-0147">Chitin-binding</keyword>
<keyword id="KW-0903">Direct protein sequencing</keyword>
<keyword id="KW-1015">Disulfide bond</keyword>
<keyword id="KW-0325">Glycoprotein</keyword>
<keyword id="KW-0326">Glycosidase</keyword>
<keyword id="KW-0378">Hydrolase</keyword>
<keyword id="KW-0611">Plant defense</keyword>
<keyword id="KW-0624">Polysaccharide degradation</keyword>
<keyword id="KW-1185">Reference proteome</keyword>
<keyword id="KW-0964">Secreted</keyword>
<keyword id="KW-0732">Signal</keyword>
<sequence>MAMAKAGAPRVSAAQLVTLGLSLLCAVAGPAAAQNCGCQPNVCCSKFGYCGTTDEYCGDGCQSGPCRSGGGGSSGGGGANVASVVTGSFFNGIKSQAGSGCEGKNFYTRSAFLSAVKAYPGFAHGGSQVQGKREIAAFFAHATHETGHFCYISEINKSNAYCDPTKRQWPCAAGQKYYGRGPLQISWNYNYGPAGRAIGFDGLGDPGRVARDAVVAFKAALWFWMNSVHGVVPQGFGATTRAINGALECGGNNPAQMNARVGYYRQYCRQLGVDPGPNLTC</sequence>
<dbReference type="EC" id="3.2.1.14" evidence="1"/>
<dbReference type="EMBL" id="M84165">
    <property type="protein sequence ID" value="AAA33445.1"/>
    <property type="molecule type" value="Genomic_DNA"/>
</dbReference>
<dbReference type="EMBL" id="BT063070">
    <property type="protein sequence ID" value="ACN27767.1"/>
    <property type="molecule type" value="mRNA"/>
</dbReference>
<dbReference type="EMBL" id="CM000786">
    <property type="protein sequence ID" value="AQK44501.1"/>
    <property type="molecule type" value="Genomic_DNA"/>
</dbReference>
<dbReference type="PIR" id="B42424">
    <property type="entry name" value="B42424"/>
</dbReference>
<dbReference type="SMR" id="P29023"/>
<dbReference type="FunCoup" id="P29023">
    <property type="interactions" value="153"/>
</dbReference>
<dbReference type="IntAct" id="P29023">
    <property type="interactions" value="10"/>
</dbReference>
<dbReference type="STRING" id="4577.P29023"/>
<dbReference type="Allergome" id="7663">
    <property type="allergen name" value="Zea m 8"/>
</dbReference>
<dbReference type="CAZy" id="CBM18">
    <property type="family name" value="Carbohydrate-Binding Module Family 18"/>
</dbReference>
<dbReference type="CAZy" id="GH19">
    <property type="family name" value="Glycoside Hydrolase Family 19"/>
</dbReference>
<dbReference type="PaxDb" id="4577-GRMZM2G005633_P02"/>
<dbReference type="EnsemblPlants" id="Zm00001eb425600_T001">
    <property type="protein sequence ID" value="Zm00001eb425600_P001"/>
    <property type="gene ID" value="Zm00001eb425600"/>
</dbReference>
<dbReference type="Gramene" id="Zm00001eb425600_T001">
    <property type="protein sequence ID" value="Zm00001eb425600_P001"/>
    <property type="gene ID" value="Zm00001eb425600"/>
</dbReference>
<dbReference type="MaizeGDB" id="25130"/>
<dbReference type="eggNOG" id="KOG4742">
    <property type="taxonomic scope" value="Eukaryota"/>
</dbReference>
<dbReference type="HOGENOM" id="CLU_045506_1_1_1"/>
<dbReference type="InParanoid" id="P29023"/>
<dbReference type="OMA" id="NSNCHNA"/>
<dbReference type="OrthoDB" id="5985073at2759"/>
<dbReference type="Proteomes" id="UP000007305">
    <property type="component" value="Chromosome 10"/>
</dbReference>
<dbReference type="ExpressionAtlas" id="P29023">
    <property type="expression patterns" value="baseline and differential"/>
</dbReference>
<dbReference type="GO" id="GO:0005576">
    <property type="term" value="C:extracellular region"/>
    <property type="evidence" value="ECO:0007669"/>
    <property type="project" value="UniProtKB-SubCell"/>
</dbReference>
<dbReference type="GO" id="GO:0008061">
    <property type="term" value="F:chitin binding"/>
    <property type="evidence" value="ECO:0007669"/>
    <property type="project" value="UniProtKB-KW"/>
</dbReference>
<dbReference type="GO" id="GO:0004568">
    <property type="term" value="F:chitinase activity"/>
    <property type="evidence" value="ECO:0000318"/>
    <property type="project" value="GO_Central"/>
</dbReference>
<dbReference type="GO" id="GO:0008843">
    <property type="term" value="F:endochitinase activity"/>
    <property type="evidence" value="ECO:0007669"/>
    <property type="project" value="UniProtKB-EC"/>
</dbReference>
<dbReference type="GO" id="GO:0016998">
    <property type="term" value="P:cell wall macromolecule catabolic process"/>
    <property type="evidence" value="ECO:0007669"/>
    <property type="project" value="InterPro"/>
</dbReference>
<dbReference type="GO" id="GO:0006032">
    <property type="term" value="P:chitin catabolic process"/>
    <property type="evidence" value="ECO:0007669"/>
    <property type="project" value="UniProtKB-KW"/>
</dbReference>
<dbReference type="GO" id="GO:0006952">
    <property type="term" value="P:defense response"/>
    <property type="evidence" value="ECO:0007669"/>
    <property type="project" value="UniProtKB-KW"/>
</dbReference>
<dbReference type="GO" id="GO:0000272">
    <property type="term" value="P:polysaccharide catabolic process"/>
    <property type="evidence" value="ECO:0007669"/>
    <property type="project" value="UniProtKB-KW"/>
</dbReference>
<dbReference type="CDD" id="cd00325">
    <property type="entry name" value="chitinase_GH19"/>
    <property type="match status" value="1"/>
</dbReference>
<dbReference type="CDD" id="cd00035">
    <property type="entry name" value="ChtBD1"/>
    <property type="match status" value="1"/>
</dbReference>
<dbReference type="FunFam" id="3.30.60.10:FF:000002">
    <property type="entry name" value="Chitinase B"/>
    <property type="match status" value="1"/>
</dbReference>
<dbReference type="FunFam" id="3.30.20.10:FF:000001">
    <property type="entry name" value="Endochitinase (Chitinase)"/>
    <property type="match status" value="1"/>
</dbReference>
<dbReference type="Gene3D" id="1.10.530.10">
    <property type="match status" value="1"/>
</dbReference>
<dbReference type="Gene3D" id="3.30.20.10">
    <property type="entry name" value="Endochitinase, domain 2"/>
    <property type="match status" value="1"/>
</dbReference>
<dbReference type="Gene3D" id="3.30.60.10">
    <property type="entry name" value="Endochitinase-like"/>
    <property type="match status" value="1"/>
</dbReference>
<dbReference type="InterPro" id="IPR001002">
    <property type="entry name" value="Chitin-bd_1"/>
</dbReference>
<dbReference type="InterPro" id="IPR018371">
    <property type="entry name" value="Chitin-binding_1_CS"/>
</dbReference>
<dbReference type="InterPro" id="IPR036861">
    <property type="entry name" value="Endochitinase-like_sf"/>
</dbReference>
<dbReference type="InterPro" id="IPR016283">
    <property type="entry name" value="Glyco_hydro_19"/>
</dbReference>
<dbReference type="InterPro" id="IPR000726">
    <property type="entry name" value="Glyco_hydro_19_cat"/>
</dbReference>
<dbReference type="InterPro" id="IPR023346">
    <property type="entry name" value="Lysozyme-like_dom_sf"/>
</dbReference>
<dbReference type="PANTHER" id="PTHR22595">
    <property type="entry name" value="CHITINASE-RELATED"/>
    <property type="match status" value="1"/>
</dbReference>
<dbReference type="PANTHER" id="PTHR22595:SF187">
    <property type="entry name" value="ENDOCHITINASE A"/>
    <property type="match status" value="1"/>
</dbReference>
<dbReference type="Pfam" id="PF00187">
    <property type="entry name" value="Chitin_bind_1"/>
    <property type="match status" value="1"/>
</dbReference>
<dbReference type="Pfam" id="PF00182">
    <property type="entry name" value="Glyco_hydro_19"/>
    <property type="match status" value="2"/>
</dbReference>
<dbReference type="PIRSF" id="PIRSF001060">
    <property type="entry name" value="Endochitinase"/>
    <property type="match status" value="1"/>
</dbReference>
<dbReference type="PRINTS" id="PR00451">
    <property type="entry name" value="CHITINBINDNG"/>
</dbReference>
<dbReference type="SMART" id="SM00270">
    <property type="entry name" value="ChtBD1"/>
    <property type="match status" value="1"/>
</dbReference>
<dbReference type="SUPFAM" id="SSF53955">
    <property type="entry name" value="Lysozyme-like"/>
    <property type="match status" value="1"/>
</dbReference>
<dbReference type="SUPFAM" id="SSF57016">
    <property type="entry name" value="Plant lectins/antimicrobial peptides"/>
    <property type="match status" value="1"/>
</dbReference>
<dbReference type="PROSITE" id="PS00026">
    <property type="entry name" value="CHIT_BIND_I_1"/>
    <property type="match status" value="1"/>
</dbReference>
<dbReference type="PROSITE" id="PS50941">
    <property type="entry name" value="CHIT_BIND_I_2"/>
    <property type="match status" value="1"/>
</dbReference>
<dbReference type="PROSITE" id="PS00773">
    <property type="entry name" value="CHITINASE_19_1"/>
    <property type="match status" value="1"/>
</dbReference>
<dbReference type="PROSITE" id="PS00774">
    <property type="entry name" value="CHITINASE_19_2"/>
    <property type="match status" value="1"/>
</dbReference>
<gene>
    <name evidence="9" type="primary">CHIB</name>
    <name evidence="9" type="synonym">CTB1</name>
</gene>
<protein>
    <recommendedName>
        <fullName>Endochitinase B</fullName>
        <ecNumber evidence="1">3.2.1.14</ecNumber>
    </recommendedName>
    <alternativeName>
        <fullName evidence="8">ChitB</fullName>
    </alternativeName>
    <alternativeName>
        <fullName>Seed chitinase B</fullName>
    </alternativeName>
</protein>
<accession>P29023</accession>
<accession>C0P451</accession>
<organism>
    <name type="scientific">Zea mays</name>
    <name type="common">Maize</name>
    <dbReference type="NCBI Taxonomy" id="4577"/>
    <lineage>
        <taxon>Eukaryota</taxon>
        <taxon>Viridiplantae</taxon>
        <taxon>Streptophyta</taxon>
        <taxon>Embryophyta</taxon>
        <taxon>Tracheophyta</taxon>
        <taxon>Spermatophyta</taxon>
        <taxon>Magnoliopsida</taxon>
        <taxon>Liliopsida</taxon>
        <taxon>Poales</taxon>
        <taxon>Poaceae</taxon>
        <taxon>PACMAD clade</taxon>
        <taxon>Panicoideae</taxon>
        <taxon>Andropogonodae</taxon>
        <taxon>Andropogoneae</taxon>
        <taxon>Tripsacinae</taxon>
        <taxon>Zea</taxon>
    </lineage>
</organism>
<evidence type="ECO:0000250" key="1">
    <source>
        <dbReference type="UniProtKB" id="P29022"/>
    </source>
</evidence>
<evidence type="ECO:0000255" key="2"/>
<evidence type="ECO:0000255" key="3">
    <source>
        <dbReference type="PROSITE-ProRule" id="PRU00261"/>
    </source>
</evidence>
<evidence type="ECO:0000255" key="4">
    <source>
        <dbReference type="PROSITE-ProRule" id="PRU00498"/>
    </source>
</evidence>
<evidence type="ECO:0000269" key="5">
    <source>
    </source>
</evidence>
<evidence type="ECO:0000269" key="6">
    <source>
    </source>
</evidence>
<evidence type="ECO:0000269" key="7">
    <source>
    </source>
</evidence>
<evidence type="ECO:0000303" key="8">
    <source>
    </source>
</evidence>
<evidence type="ECO:0000305" key="9"/>
<evidence type="ECO:0000312" key="10">
    <source>
        <dbReference type="EMBL" id="ACN27767.1"/>
    </source>
</evidence>
<evidence type="ECO:0000312" key="11">
    <source>
        <dbReference type="EMBL" id="AQK44501.1"/>
    </source>
</evidence>
<evidence type="ECO:0000312" key="12">
    <source>
        <dbReference type="Proteomes" id="UP000007305"/>
    </source>
</evidence>
<reference key="1">
    <citation type="journal article" date="1992" name="J. Biol. Chem.">
        <title>Antifungal proteins from plants. Purification, molecular cloning, and antifungal properties of chitinases from maize seed.</title>
        <authorList>
            <person name="Huynh Q.K."/>
            <person name="Hironaka C.M."/>
            <person name="Levine E.B."/>
            <person name="Smith C.E."/>
            <person name="Borgmeyer J.R."/>
            <person name="Shah D.M."/>
        </authorList>
    </citation>
    <scope>NUCLEOTIDE SEQUENCE [GENOMIC DNA]</scope>
    <scope>FUNCTION</scope>
    <source>
        <tissue>Seed</tissue>
    </source>
</reference>
<reference evidence="10" key="2">
    <citation type="journal article" date="2009" name="PLoS Genet.">
        <title>Sequencing, mapping, and analysis of 27,455 maize full-length cDNAs.</title>
        <authorList>
            <person name="Soderlund C."/>
            <person name="Descour A."/>
            <person name="Kudrna D."/>
            <person name="Bomhoff M."/>
            <person name="Boyd L."/>
            <person name="Currie J."/>
            <person name="Angelova A."/>
            <person name="Collura K."/>
            <person name="Wissotski M."/>
            <person name="Ashley E."/>
            <person name="Morrow D."/>
            <person name="Fernandes J."/>
            <person name="Walbot V."/>
            <person name="Yu Y."/>
        </authorList>
    </citation>
    <scope>NUCLEOTIDE SEQUENCE [LARGE SCALE MRNA]</scope>
    <source>
        <strain evidence="10">cv. B73</strain>
    </source>
</reference>
<reference evidence="12" key="3">
    <citation type="journal article" date="2009" name="Science">
        <title>The B73 maize genome: complexity, diversity, and dynamics.</title>
        <authorList>
            <person name="Schnable P.S."/>
            <person name="Ware D."/>
            <person name="Fulton R.S."/>
            <person name="Stein J.C."/>
            <person name="Wei F."/>
            <person name="Pasternak S."/>
            <person name="Liang C."/>
            <person name="Zhang J."/>
            <person name="Fulton L."/>
            <person name="Graves T.A."/>
            <person name="Minx P."/>
            <person name="Reily A.D."/>
            <person name="Courtney L."/>
            <person name="Kruchowski S.S."/>
            <person name="Tomlinson C."/>
            <person name="Strong C."/>
            <person name="Delehaunty K."/>
            <person name="Fronick C."/>
            <person name="Courtney B."/>
            <person name="Rock S.M."/>
            <person name="Belter E."/>
            <person name="Du F."/>
            <person name="Kim K."/>
            <person name="Abbott R.M."/>
            <person name="Cotton M."/>
            <person name="Levy A."/>
            <person name="Marchetto P."/>
            <person name="Ochoa K."/>
            <person name="Jackson S.M."/>
            <person name="Gillam B."/>
            <person name="Chen W."/>
            <person name="Yan L."/>
            <person name="Higginbotham J."/>
            <person name="Cardenas M."/>
            <person name="Waligorski J."/>
            <person name="Applebaum E."/>
            <person name="Phelps L."/>
            <person name="Falcone J."/>
            <person name="Kanchi K."/>
            <person name="Thane T."/>
            <person name="Scimone A."/>
            <person name="Thane N."/>
            <person name="Henke J."/>
            <person name="Wang T."/>
            <person name="Ruppert J."/>
            <person name="Shah N."/>
            <person name="Rotter K."/>
            <person name="Hodges J."/>
            <person name="Ingenthron E."/>
            <person name="Cordes M."/>
            <person name="Kohlberg S."/>
            <person name="Sgro J."/>
            <person name="Delgado B."/>
            <person name="Mead K."/>
            <person name="Chinwalla A."/>
            <person name="Leonard S."/>
            <person name="Crouse K."/>
            <person name="Collura K."/>
            <person name="Kudrna D."/>
            <person name="Currie J."/>
            <person name="He R."/>
            <person name="Angelova A."/>
            <person name="Rajasekar S."/>
            <person name="Mueller T."/>
            <person name="Lomeli R."/>
            <person name="Scara G."/>
            <person name="Ko A."/>
            <person name="Delaney K."/>
            <person name="Wissotski M."/>
            <person name="Lopez G."/>
            <person name="Campos D."/>
            <person name="Braidotti M."/>
            <person name="Ashley E."/>
            <person name="Golser W."/>
            <person name="Kim H."/>
            <person name="Lee S."/>
            <person name="Lin J."/>
            <person name="Dujmic Z."/>
            <person name="Kim W."/>
            <person name="Talag J."/>
            <person name="Zuccolo A."/>
            <person name="Fan C."/>
            <person name="Sebastian A."/>
            <person name="Kramer M."/>
            <person name="Spiegel L."/>
            <person name="Nascimento L."/>
            <person name="Zutavern T."/>
            <person name="Miller B."/>
            <person name="Ambroise C."/>
            <person name="Muller S."/>
            <person name="Spooner W."/>
            <person name="Narechania A."/>
            <person name="Ren L."/>
            <person name="Wei S."/>
            <person name="Kumari S."/>
            <person name="Faga B."/>
            <person name="Levy M.J."/>
            <person name="McMahan L."/>
            <person name="Van Buren P."/>
            <person name="Vaughn M.W."/>
            <person name="Ying K."/>
            <person name="Yeh C.-T."/>
            <person name="Emrich S.J."/>
            <person name="Jia Y."/>
            <person name="Kalyanaraman A."/>
            <person name="Hsia A.-P."/>
            <person name="Barbazuk W.B."/>
            <person name="Baucom R.S."/>
            <person name="Brutnell T.P."/>
            <person name="Carpita N.C."/>
            <person name="Chaparro C."/>
            <person name="Chia J.-M."/>
            <person name="Deragon J.-M."/>
            <person name="Estill J.C."/>
            <person name="Fu Y."/>
            <person name="Jeddeloh J.A."/>
            <person name="Han Y."/>
            <person name="Lee H."/>
            <person name="Li P."/>
            <person name="Lisch D.R."/>
            <person name="Liu S."/>
            <person name="Liu Z."/>
            <person name="Nagel D.H."/>
            <person name="McCann M.C."/>
            <person name="SanMiguel P."/>
            <person name="Myers A.M."/>
            <person name="Nettleton D."/>
            <person name="Nguyen J."/>
            <person name="Penning B.W."/>
            <person name="Ponnala L."/>
            <person name="Schneider K.L."/>
            <person name="Schwartz D.C."/>
            <person name="Sharma A."/>
            <person name="Soderlund C."/>
            <person name="Springer N.M."/>
            <person name="Sun Q."/>
            <person name="Wang H."/>
            <person name="Waterman M."/>
            <person name="Westerman R."/>
            <person name="Wolfgruber T.K."/>
            <person name="Yang L."/>
            <person name="Yu Y."/>
            <person name="Zhang L."/>
            <person name="Zhou S."/>
            <person name="Zhu Q."/>
            <person name="Bennetzen J.L."/>
            <person name="Dawe R.K."/>
            <person name="Jiang J."/>
            <person name="Jiang N."/>
            <person name="Presting G.G."/>
            <person name="Wessler S.R."/>
            <person name="Aluru S."/>
            <person name="Martienssen R.A."/>
            <person name="Clifton S.W."/>
            <person name="McCombie W.R."/>
            <person name="Wing R.A."/>
            <person name="Wilson R.K."/>
        </authorList>
    </citation>
    <scope>NUCLEOTIDE SEQUENCE [LARGE SCALE GENOMIC DNA]</scope>
    <source>
        <strain evidence="12">cv. B73</strain>
    </source>
</reference>
<reference evidence="11" key="4">
    <citation type="submission" date="2015-12" db="EMBL/GenBank/DDBJ databases">
        <title>Update maize B73 reference genome by single molecule sequencing technologies.</title>
        <authorList>
            <consortium name="Maize Genome Sequencing Project"/>
            <person name="Ware D."/>
        </authorList>
    </citation>
    <scope>NUCLEOTIDE SEQUENCE [LARGE SCALE GENOMIC DNA]</scope>
    <source>
        <tissue evidence="11">Seedling</tissue>
    </source>
</reference>
<reference key="5">
    <citation type="journal article" date="1992" name="J. Biol. Chem.">
        <title>Identification of an essential tyrosine residue in the catalytic site of a chitinase isolated from Zea mays that is selectively modified during inactivation with 1-ethyl-3-(3-dimethylaminopropyl)-carbodiimide.</title>
        <authorList>
            <person name="Verburg J.G."/>
            <person name="Smith C.E."/>
            <person name="Lisek C.A."/>
            <person name="Huynh Q.K."/>
        </authorList>
    </citation>
    <scope>PROTEIN SEQUENCE OF 169-184</scope>
    <source>
        <tissue>Seed</tissue>
    </source>
</reference>
<reference key="6">
    <citation type="journal article" date="2014" name="Biochem. J.">
        <title>Polyglycine hydrolases secreted by Pleosporineae fungi that target the linker region of plant class IV chitinases.</title>
        <authorList>
            <person name="Naumann T.A."/>
            <person name="Wicklow D.T."/>
            <person name="Price N.P."/>
        </authorList>
    </citation>
    <scope>FUNCTION</scope>
    <scope>IDENTIFICATION BY MASS SPECTROMETRY</scope>
    <scope>MUTAGENESIS OF 73-SER-SER-74</scope>
</reference>
<reference key="7">
    <citation type="journal article" date="2015" name="Protein Sci.">
        <title>Polyglycine hydrolases: Fungal beta-lactamase-like endoproteases that cleave polyglycine regions within plant class IV chitinases.</title>
        <authorList>
            <person name="Naumann T.A."/>
            <person name="Naldrett M.J."/>
            <person name="Ward T.J."/>
            <person name="Price N.P."/>
        </authorList>
    </citation>
    <scope>FUNCTION</scope>
    <scope>IDENTIFICATION BY MASS SPECTROMETRY</scope>
</reference>
<name>CHIB_MAIZE</name>
<feature type="signal peptide" evidence="2">
    <location>
        <begin position="1"/>
        <end position="33"/>
    </location>
</feature>
<feature type="chain" id="PRO_0000005304" description="Endochitinase B" evidence="2">
    <location>
        <begin position="34"/>
        <end position="281"/>
    </location>
</feature>
<feature type="domain" description="Chitin-binding type-1" evidence="3">
    <location>
        <begin position="34"/>
        <end position="68"/>
    </location>
</feature>
<feature type="region of interest" description="Hinge region (Gly-rich)" evidence="9">
    <location>
        <begin position="69"/>
        <end position="78"/>
    </location>
</feature>
<feature type="region of interest" description="Catalytic" evidence="9">
    <location>
        <begin position="79"/>
        <end position="281"/>
    </location>
</feature>
<feature type="active site" description="Proton donor" evidence="1">
    <location>
        <position position="145"/>
    </location>
</feature>
<feature type="glycosylation site" description="N-linked (GlcNAc...) asparagine" evidence="4">
    <location>
        <position position="156"/>
    </location>
</feature>
<feature type="glycosylation site" description="N-linked (GlcNAc...) asparagine" evidence="4">
    <location>
        <position position="278"/>
    </location>
</feature>
<feature type="disulfide bond" evidence="3">
    <location>
        <begin position="36"/>
        <end position="44"/>
    </location>
</feature>
<feature type="disulfide bond" evidence="3">
    <location>
        <begin position="38"/>
        <end position="50"/>
    </location>
</feature>
<feature type="disulfide bond" evidence="3">
    <location>
        <begin position="43"/>
        <end position="57"/>
    </location>
</feature>
<feature type="disulfide bond" evidence="3">
    <location>
        <begin position="61"/>
        <end position="66"/>
    </location>
</feature>
<feature type="disulfide bond" evidence="1">
    <location>
        <begin position="101"/>
        <end position="150"/>
    </location>
</feature>
<feature type="disulfide bond" evidence="1">
    <location>
        <begin position="162"/>
        <end position="171"/>
    </location>
</feature>
<feature type="disulfide bond" evidence="1">
    <location>
        <begin position="249"/>
        <end position="281"/>
    </location>
</feature>
<feature type="mutagenesis site" description="Increases its hydrolysis by fungal polyglycine hydrolases." evidence="6">
    <original>SS</original>
    <variation>GG</variation>
    <location>
        <begin position="73"/>
        <end position="74"/>
    </location>
</feature>
<feature type="sequence conflict" description="In Ref. 1; AAA33445." evidence="9" ref="1">
    <original>A</original>
    <variation>P</variation>
    <location>
        <position position="14"/>
    </location>
</feature>
<feature type="sequence conflict" description="In Ref. 1; AAA33445." evidence="9" ref="1">
    <original>T</original>
    <variation>A</variation>
    <location>
        <position position="18"/>
    </location>
</feature>
<feature type="sequence conflict" description="In Ref. 1; AAA33445." evidence="9" ref="1">
    <original>S</original>
    <variation>A</variation>
    <location>
        <position position="22"/>
    </location>
</feature>
<feature type="sequence conflict" description="In Ref. 1; AAA33445." evidence="9" ref="1">
    <original>GGGS</original>
    <variation>RGGGG</variation>
    <location>
        <begin position="70"/>
        <end position="73"/>
    </location>
</feature>
<feature type="sequence conflict" description="In Ref. 1; AAA33445." evidence="9" ref="1">
    <original>G</original>
    <variation>S</variation>
    <location>
        <position position="87"/>
    </location>
</feature>
<feature type="sequence conflict" description="In Ref. 1; AAA33445." evidence="9" ref="1">
    <original>S</original>
    <variation>N</variation>
    <location>
        <position position="95"/>
    </location>
</feature>
<feature type="sequence conflict" description="In Ref. 1; AAA33445." evidence="9" ref="1">
    <original>A</original>
    <variation>G</variation>
    <location>
        <position position="118"/>
    </location>
</feature>
<feature type="sequence conflict" description="In Ref. 1; AAA33445." evidence="9" ref="1">
    <original>ING</original>
    <variation>MQR</variation>
    <location>
        <begin position="243"/>
        <end position="245"/>
    </location>
</feature>
<comment type="function">
    <text evidence="5 6 7">Defense against chitin-containing fungal pathogens (PubMed:1551872). Its action is countered by fungal polyglycine hydrolases, that cleaves within its hinge region (Gly-rich) to disrupt chitin-binding (PubMed:24627966, PubMed:25966977).</text>
</comment>
<comment type="catalytic activity">
    <reaction evidence="1">
        <text>Random endo-hydrolysis of N-acetyl-beta-D-glucosaminide (1-&gt;4)-beta-linkages in chitin and chitodextrins.</text>
        <dbReference type="EC" id="3.2.1.14"/>
    </reaction>
</comment>
<comment type="subcellular location">
    <subcellularLocation>
        <location evidence="1">Secreted</location>
    </subcellularLocation>
</comment>
<comment type="miscellaneous">
    <text>Maize chitinase B seems to be less active than chitinase A.</text>
</comment>
<comment type="similarity">
    <text evidence="9">Belongs to the glycosyl hydrolase 19 family. Chitinase class I subfamily.</text>
</comment>